<gene>
    <name type="primary">hicA1</name>
    <name type="ordered locus">plu3492</name>
</gene>
<accession>Q7N1I2</accession>
<evidence type="ECO:0000250" key="1"/>
<evidence type="ECO:0000305" key="2"/>
<keyword id="KW-0255">Endonuclease</keyword>
<keyword id="KW-0378">Hydrolase</keyword>
<keyword id="KW-0540">Nuclease</keyword>
<keyword id="KW-1185">Reference proteome</keyword>
<keyword id="KW-0694">RNA-binding</keyword>
<keyword id="KW-0346">Stress response</keyword>
<keyword id="KW-1277">Toxin-antitoxin system</keyword>
<reference key="1">
    <citation type="journal article" date="2003" name="Nat. Biotechnol.">
        <title>The genome sequence of the entomopathogenic bacterium Photorhabdus luminescens.</title>
        <authorList>
            <person name="Duchaud E."/>
            <person name="Rusniok C."/>
            <person name="Frangeul L."/>
            <person name="Buchrieser C."/>
            <person name="Givaudan A."/>
            <person name="Taourit S."/>
            <person name="Bocs S."/>
            <person name="Boursaux-Eude C."/>
            <person name="Chandler M."/>
            <person name="Charles J.-F."/>
            <person name="Dassa E."/>
            <person name="Derose R."/>
            <person name="Derzelle S."/>
            <person name="Freyssinet G."/>
            <person name="Gaudriault S."/>
            <person name="Medigue C."/>
            <person name="Lanois A."/>
            <person name="Powell K."/>
            <person name="Siguier P."/>
            <person name="Vincent R."/>
            <person name="Wingate V."/>
            <person name="Zouine M."/>
            <person name="Glaser P."/>
            <person name="Boemare N."/>
            <person name="Danchin A."/>
            <person name="Kunst F."/>
        </authorList>
    </citation>
    <scope>NUCLEOTIDE SEQUENCE [LARGE SCALE GENOMIC DNA]</scope>
    <source>
        <strain>DSM 15139 / CIP 105565 / TT01</strain>
    </source>
</reference>
<dbReference type="EC" id="3.1.-.-"/>
<dbReference type="EMBL" id="BX571870">
    <property type="protein sequence ID" value="CAE15865.1"/>
    <property type="molecule type" value="Genomic_DNA"/>
</dbReference>
<dbReference type="RefSeq" id="WP_011147672.1">
    <property type="nucleotide sequence ID" value="NC_005126.1"/>
</dbReference>
<dbReference type="SMR" id="Q7N1I2"/>
<dbReference type="STRING" id="243265.plu3492"/>
<dbReference type="KEGG" id="plu:plu3492"/>
<dbReference type="eggNOG" id="COG1724">
    <property type="taxonomic scope" value="Bacteria"/>
</dbReference>
<dbReference type="HOGENOM" id="CLU_164851_5_0_6"/>
<dbReference type="OrthoDB" id="6699594at2"/>
<dbReference type="Proteomes" id="UP000002514">
    <property type="component" value="Chromosome"/>
</dbReference>
<dbReference type="GO" id="GO:0004519">
    <property type="term" value="F:endonuclease activity"/>
    <property type="evidence" value="ECO:0007669"/>
    <property type="project" value="UniProtKB-KW"/>
</dbReference>
<dbReference type="GO" id="GO:0003729">
    <property type="term" value="F:mRNA binding"/>
    <property type="evidence" value="ECO:0007669"/>
    <property type="project" value="InterPro"/>
</dbReference>
<dbReference type="Gene3D" id="3.30.920.30">
    <property type="entry name" value="Hypothetical protein"/>
    <property type="match status" value="1"/>
</dbReference>
<dbReference type="InterPro" id="IPR012933">
    <property type="entry name" value="HicA_mRNA_interferase"/>
</dbReference>
<dbReference type="InterPro" id="IPR038570">
    <property type="entry name" value="HicA_sf"/>
</dbReference>
<dbReference type="Pfam" id="PF07927">
    <property type="entry name" value="HicA_toxin"/>
    <property type="match status" value="1"/>
</dbReference>
<dbReference type="SUPFAM" id="SSF54786">
    <property type="entry name" value="YcfA/nrd intein domain"/>
    <property type="match status" value="1"/>
</dbReference>
<feature type="chain" id="PRO_0000259909" description="Probable mRNA interferase HicA 1">
    <location>
        <begin position="1"/>
        <end position="57"/>
    </location>
</feature>
<protein>
    <recommendedName>
        <fullName>Probable mRNA interferase HicA 1</fullName>
        <ecNumber>3.1.-.-</ecNumber>
    </recommendedName>
    <alternativeName>
        <fullName>Endoribonuclease HicA 1</fullName>
    </alternativeName>
    <alternativeName>
        <fullName>Toxin HicA 1</fullName>
    </alternativeName>
</protein>
<proteinExistence type="inferred from homology"/>
<comment type="function">
    <text evidence="1">Toxic component of a type II toxin-antitoxin (TA) system. A probable translation-independent mRNA interferase (By similarity).</text>
</comment>
<comment type="subunit">
    <text evidence="1">Probably forms a complex with the cognate antitoxin HicB 1 which inhibits the mRNA interferase activity.</text>
</comment>
<comment type="similarity">
    <text evidence="2">Belongs to the HicA mRNA interferase family.</text>
</comment>
<organism>
    <name type="scientific">Photorhabdus laumondii subsp. laumondii (strain DSM 15139 / CIP 105565 / TT01)</name>
    <name type="common">Photorhabdus luminescens subsp. laumondii</name>
    <dbReference type="NCBI Taxonomy" id="243265"/>
    <lineage>
        <taxon>Bacteria</taxon>
        <taxon>Pseudomonadati</taxon>
        <taxon>Pseudomonadota</taxon>
        <taxon>Gammaproteobacteria</taxon>
        <taxon>Enterobacterales</taxon>
        <taxon>Morganellaceae</taxon>
        <taxon>Photorhabdus</taxon>
    </lineage>
</organism>
<sequence length="57" mass="6713">MKQSEFRRWLEAQGVEVSNGTNHLKLRYQGKRSIMPRHPSQEIKEPLRKAIIKQLGL</sequence>
<name>HICA1_PHOLL</name>